<evidence type="ECO:0000250" key="1">
    <source>
        <dbReference type="UniProtKB" id="Q6EBC1"/>
    </source>
</evidence>
<evidence type="ECO:0000255" key="2"/>
<evidence type="ECO:0000255" key="3">
    <source>
        <dbReference type="PROSITE-ProRule" id="PRU00498"/>
    </source>
</evidence>
<evidence type="ECO:0000256" key="4">
    <source>
        <dbReference type="SAM" id="MobiDB-lite"/>
    </source>
</evidence>
<evidence type="ECO:0000269" key="5">
    <source>
    </source>
</evidence>
<evidence type="ECO:0000269" key="6">
    <source>
    </source>
</evidence>
<evidence type="ECO:0000269" key="7">
    <source>
    </source>
</evidence>
<evidence type="ECO:0000269" key="8">
    <source>
    </source>
</evidence>
<evidence type="ECO:0000303" key="9">
    <source>
    </source>
</evidence>
<evidence type="ECO:0000303" key="10">
    <source>
    </source>
</evidence>
<evidence type="ECO:0000303" key="11">
    <source>
    </source>
</evidence>
<evidence type="ECO:0000303" key="12">
    <source>
    </source>
</evidence>
<evidence type="ECO:0000305" key="13"/>
<evidence type="ECO:0000305" key="14">
    <source>
    </source>
</evidence>
<evidence type="ECO:0000312" key="15">
    <source>
        <dbReference type="EMBL" id="CAI84850.2"/>
    </source>
</evidence>
<evidence type="ECO:0007829" key="16">
    <source>
        <dbReference type="PDB" id="8OFD"/>
    </source>
</evidence>
<comment type="function">
    <text evidence="5">Seed storage protein. Accumulates during seed development and is hydrolyzed after germination to provide a carbon and nitrogen source for the developing seedling.</text>
</comment>
<comment type="function">
    <molecule>Blad</molecule>
    <text evidence="8">Has a lectin-like activity.</text>
</comment>
<comment type="allergen">
    <text evidence="6 7">Causes an allergic reaction in human. Lup an 1 is the major lupin allergen.</text>
</comment>
<comment type="miscellaneous">
    <text evidence="14">The initial characterization of blad (PubMed:9299789) was made on a seed storage protein extract containing both conglutin beta 1 and 2.</text>
</comment>
<comment type="similarity">
    <text evidence="13">Belongs to the 7S seed storage protein family.</text>
</comment>
<feature type="signal peptide" evidence="2">
    <location>
        <begin position="1"/>
        <end position="30"/>
    </location>
</feature>
<feature type="propeptide" id="PRO_0000435268" evidence="8">
    <location>
        <begin position="31"/>
        <end position="108"/>
    </location>
</feature>
<feature type="chain" id="PRO_0000435269" description="Blad" evidence="1">
    <location>
        <begin position="109"/>
        <end position="281"/>
    </location>
</feature>
<feature type="chain" id="PRO_0000435270" description="Conglutin beta 1">
    <location>
        <begin position="113"/>
        <end position="531"/>
    </location>
</feature>
<feature type="domain" description="Cupin type-1 1" evidence="2">
    <location>
        <begin position="115"/>
        <end position="273"/>
    </location>
</feature>
<feature type="domain" description="Cupin type-1 2" evidence="2">
    <location>
        <begin position="332"/>
        <end position="494"/>
    </location>
</feature>
<feature type="region of interest" description="Disordered" evidence="4">
    <location>
        <begin position="37"/>
        <end position="124"/>
    </location>
</feature>
<feature type="region of interest" description="Disordered" evidence="4">
    <location>
        <begin position="283"/>
        <end position="302"/>
    </location>
</feature>
<feature type="region of interest" description="Disordered" evidence="4">
    <location>
        <begin position="314"/>
        <end position="337"/>
    </location>
</feature>
<feature type="region of interest" description="Disordered" evidence="4">
    <location>
        <begin position="508"/>
        <end position="531"/>
    </location>
</feature>
<feature type="compositionally biased region" description="Basic and acidic residues" evidence="4">
    <location>
        <begin position="37"/>
        <end position="51"/>
    </location>
</feature>
<feature type="compositionally biased region" description="Basic and acidic residues" evidence="4">
    <location>
        <begin position="79"/>
        <end position="99"/>
    </location>
</feature>
<feature type="compositionally biased region" description="Basic and acidic residues" evidence="4">
    <location>
        <begin position="286"/>
        <end position="302"/>
    </location>
</feature>
<feature type="compositionally biased region" description="Polar residues" evidence="4">
    <location>
        <begin position="316"/>
        <end position="337"/>
    </location>
</feature>
<feature type="glycosylation site" description="N-linked (GlcNAc...) asparagine" evidence="3">
    <location>
        <position position="444"/>
    </location>
</feature>
<feature type="helix" evidence="16">
    <location>
        <begin position="119"/>
        <end position="121"/>
    </location>
</feature>
<feature type="strand" evidence="16">
    <location>
        <begin position="122"/>
        <end position="127"/>
    </location>
</feature>
<feature type="strand" evidence="16">
    <location>
        <begin position="129"/>
        <end position="136"/>
    </location>
</feature>
<feature type="strand" evidence="16">
    <location>
        <begin position="153"/>
        <end position="159"/>
    </location>
</feature>
<feature type="strand" evidence="16">
    <location>
        <begin position="161"/>
        <end position="165"/>
    </location>
</feature>
<feature type="strand" evidence="16">
    <location>
        <begin position="168"/>
        <end position="181"/>
    </location>
</feature>
<feature type="strand" evidence="16">
    <location>
        <begin position="183"/>
        <end position="188"/>
    </location>
</feature>
<feature type="strand" evidence="16">
    <location>
        <begin position="193"/>
        <end position="198"/>
    </location>
</feature>
<feature type="strand" evidence="16">
    <location>
        <begin position="202"/>
        <end position="206"/>
    </location>
</feature>
<feature type="strand" evidence="16">
    <location>
        <begin position="211"/>
        <end position="215"/>
    </location>
</feature>
<feature type="strand" evidence="16">
    <location>
        <begin position="223"/>
        <end position="234"/>
    </location>
</feature>
<feature type="helix" evidence="16">
    <location>
        <begin position="252"/>
        <end position="255"/>
    </location>
</feature>
<feature type="helix" evidence="16">
    <location>
        <begin position="258"/>
        <end position="265"/>
    </location>
</feature>
<feature type="helix" evidence="16">
    <location>
        <begin position="269"/>
        <end position="276"/>
    </location>
</feature>
<feature type="strand" evidence="16">
    <location>
        <begin position="297"/>
        <end position="304"/>
    </location>
</feature>
<feature type="helix" evidence="16">
    <location>
        <begin position="307"/>
        <end position="314"/>
    </location>
</feature>
<feature type="strand" evidence="16">
    <location>
        <begin position="328"/>
        <end position="330"/>
    </location>
</feature>
<feature type="strand" evidence="16">
    <location>
        <begin position="340"/>
        <end position="343"/>
    </location>
</feature>
<feature type="strand" evidence="16">
    <location>
        <begin position="346"/>
        <end position="351"/>
    </location>
</feature>
<feature type="helix" evidence="16">
    <location>
        <begin position="353"/>
        <end position="355"/>
    </location>
</feature>
<feature type="turn" evidence="16">
    <location>
        <begin position="357"/>
        <end position="362"/>
    </location>
</feature>
<feature type="strand" evidence="16">
    <location>
        <begin position="365"/>
        <end position="371"/>
    </location>
</feature>
<feature type="strand" evidence="16">
    <location>
        <begin position="375"/>
        <end position="384"/>
    </location>
</feature>
<feature type="strand" evidence="16">
    <location>
        <begin position="386"/>
        <end position="393"/>
    </location>
</feature>
<feature type="strand" evidence="16">
    <location>
        <begin position="396"/>
        <end position="403"/>
    </location>
</feature>
<feature type="strand" evidence="16">
    <location>
        <begin position="420"/>
        <end position="427"/>
    </location>
</feature>
<feature type="strand" evidence="16">
    <location>
        <begin position="432"/>
        <end position="435"/>
    </location>
</feature>
<feature type="strand" evidence="16">
    <location>
        <begin position="440"/>
        <end position="444"/>
    </location>
</feature>
<feature type="strand" evidence="16">
    <location>
        <begin position="449"/>
        <end position="456"/>
    </location>
</feature>
<feature type="strand" evidence="16">
    <location>
        <begin position="463"/>
        <end position="465"/>
    </location>
</feature>
<feature type="strand" evidence="16">
    <location>
        <begin position="467"/>
        <end position="472"/>
    </location>
</feature>
<feature type="turn" evidence="16">
    <location>
        <begin position="473"/>
        <end position="476"/>
    </location>
</feature>
<feature type="helix" evidence="16">
    <location>
        <begin position="479"/>
        <end position="485"/>
    </location>
</feature>
<feature type="strand" evidence="16">
    <location>
        <begin position="486"/>
        <end position="488"/>
    </location>
</feature>
<feature type="helix" evidence="16">
    <location>
        <begin position="490"/>
        <end position="498"/>
    </location>
</feature>
<feature type="strand" evidence="16">
    <location>
        <begin position="504"/>
        <end position="507"/>
    </location>
</feature>
<organism evidence="15">
    <name type="scientific">Lupinus albus</name>
    <name type="common">White lupine</name>
    <name type="synonym">Lupinus termis</name>
    <dbReference type="NCBI Taxonomy" id="3870"/>
    <lineage>
        <taxon>Eukaryota</taxon>
        <taxon>Viridiplantae</taxon>
        <taxon>Streptophyta</taxon>
        <taxon>Embryophyta</taxon>
        <taxon>Tracheophyta</taxon>
        <taxon>Spermatophyta</taxon>
        <taxon>Magnoliopsida</taxon>
        <taxon>eudicotyledons</taxon>
        <taxon>Gunneridae</taxon>
        <taxon>Pentapetalae</taxon>
        <taxon>rosids</taxon>
        <taxon>fabids</taxon>
        <taxon>Fabales</taxon>
        <taxon>Fabaceae</taxon>
        <taxon>Papilionoideae</taxon>
        <taxon>50 kb inversion clade</taxon>
        <taxon>genistoids sensu lato</taxon>
        <taxon>core genistoids</taxon>
        <taxon>Genisteae</taxon>
        <taxon>Lupinus</taxon>
    </lineage>
</organism>
<accession>Q53HY0</accession>
<protein>
    <recommendedName>
        <fullName evidence="9">Conglutin beta 1</fullName>
    </recommendedName>
    <alternativeName>
        <fullName evidence="11">Protein Lup-1</fullName>
    </alternativeName>
    <allergenName evidence="10">Lup an 1</allergenName>
    <component>
        <recommendedName>
            <fullName evidence="12">Blad</fullName>
        </recommendedName>
    </component>
</protein>
<reference key="1">
    <citation type="journal article" date="2007" name="Phytochemistry">
        <title>Combined 2D electrophoretic approaches for the study of white lupin mature seed storage proteome.</title>
        <authorList>
            <person name="Magni C."/>
            <person name="Scarafoni A."/>
            <person name="Herndl A."/>
            <person name="Sessa F."/>
            <person name="Prinsi B."/>
            <person name="Espen L."/>
            <person name="Duranti M."/>
        </authorList>
    </citation>
    <scope>NUCLEOTIDE SEQUENCE [MRNA]</scope>
</reference>
<reference key="2">
    <citation type="journal article" date="1997" name="Planta">
        <title>Accumulation of a lectin-like breakdown product of beta-conglutin catabolism in cotyledons of germinating Lupinus albus L. seeds.</title>
        <authorList>
            <person name="dos Ramos P.C."/>
            <person name="Ferreira R.M."/>
            <person name="Franco E."/>
            <person name="Teixeira A.R."/>
        </authorList>
    </citation>
    <scope>PROTEIN SEQUENCE OF 113-131</scope>
    <scope>FUNCTION (BLAD)</scope>
    <scope>DEVELOPMENTAL STAGE (BLAD)</scope>
</reference>
<reference key="3">
    <citation type="journal article" date="2008" name="J. Agric. Food Chem.">
        <title>Proteomic analysis of lupin seed proteins to identify conglutin Beta as an allergen, Lup an 1.</title>
        <authorList>
            <person name="Goggin D.E."/>
            <person name="Mir G."/>
            <person name="Smith W.B."/>
            <person name="Stuckey M."/>
            <person name="Smith P.M."/>
        </authorList>
    </citation>
    <scope>ALLERGEN</scope>
</reference>
<reference key="4">
    <citation type="journal article" date="2010" name="Mol. Nutr. Food Res.">
        <title>Characterization of lupin major allergens (Lupinus albus L.).</title>
        <authorList>
            <person name="Guillamon E."/>
            <person name="Rodriguez J."/>
            <person name="Burbano C."/>
            <person name="Muzquiz M."/>
            <person name="Pedrosa M.M."/>
            <person name="Cabanillas B."/>
            <person name="Crespo J.F."/>
            <person name="Sancho A.I."/>
            <person name="Mills E.N."/>
            <person name="Cuadrado C."/>
        </authorList>
    </citation>
    <scope>ALLERGEN</scope>
    <scope>IDENTIFICATION BY MASS SPECTROMETRY</scope>
</reference>
<sequence length="531" mass="62032">MGKMRVRFPTLVLVLGIVFLMAVSIGIAYGEKDVLKSHERPEEREQEEWQPRRQRPQSRREEREQEQEQGSPSYPRRQSGYERRQYHERSEQREEREQEQQQGSPSYSRRQRNPYHFNSQRFQTLYKNRNGKIRVLERFDQRTNRLENLQNYRIVEFQSKPNTLILPKHSDADYVLVVLNGRATITIVNPDRRQAYNLEYGDALRIPAGSTSYILNPDDNQKLRVVKLAIPINNPGYFYDFYPSSTKDQQSYFSGFSRNTLEATFNTRYEEIQRILLGNEDEQEYEEQRRGQEQSHQDEGVIVRVSREQIQELTKYAQSSSGKDKPSQSGPFNLRSNEPIYSNKYGNFYEITPDRNPQVQDLDISLTFTEINEGALLLPHYNSKAIFIVVVGEGNGKYELVGIRDQQRQQDEQEEEPEEVRRYSARLSEGDIFVIPAGYPISVNASSNLRLLGFGINAYENQRNFLAGSEDNVIRQLDREVKELTFPGSAEDIERLIKNQQQSYFANALPQQQQQSEKEGRRGRRGPISSI</sequence>
<dbReference type="EMBL" id="AJ966470">
    <property type="protein sequence ID" value="CAI84850.2"/>
    <property type="molecule type" value="mRNA"/>
</dbReference>
<dbReference type="PDB" id="8OFD">
    <property type="method" value="X-ray"/>
    <property type="resolution" value="2.81 A"/>
    <property type="chains" value="A=109-531"/>
</dbReference>
<dbReference type="PDBsum" id="8OFD"/>
<dbReference type="SMR" id="Q53HY0"/>
<dbReference type="Allergome" id="3818">
    <property type="allergen name" value="Lup a 1"/>
</dbReference>
<dbReference type="GO" id="GO:0045735">
    <property type="term" value="F:nutrient reservoir activity"/>
    <property type="evidence" value="ECO:0007669"/>
    <property type="project" value="UniProtKB-KW"/>
</dbReference>
<dbReference type="CDD" id="cd02245">
    <property type="entry name" value="cupin_7S_vicilin-like_C"/>
    <property type="match status" value="1"/>
</dbReference>
<dbReference type="CDD" id="cd02244">
    <property type="entry name" value="cupin_7S_vicilin-like_N"/>
    <property type="match status" value="1"/>
</dbReference>
<dbReference type="Gene3D" id="2.60.120.10">
    <property type="entry name" value="Jelly Rolls"/>
    <property type="match status" value="2"/>
</dbReference>
<dbReference type="InterPro" id="IPR006045">
    <property type="entry name" value="Cupin_1"/>
</dbReference>
<dbReference type="InterPro" id="IPR014710">
    <property type="entry name" value="RmlC-like_jellyroll"/>
</dbReference>
<dbReference type="InterPro" id="IPR011051">
    <property type="entry name" value="RmlC_Cupin_sf"/>
</dbReference>
<dbReference type="InterPro" id="IPR050253">
    <property type="entry name" value="Seed_Storage-Functional"/>
</dbReference>
<dbReference type="PANTHER" id="PTHR31189">
    <property type="entry name" value="OS03G0336100 PROTEIN-RELATED"/>
    <property type="match status" value="1"/>
</dbReference>
<dbReference type="PANTHER" id="PTHR31189:SF41">
    <property type="entry name" value="VICILIN C72"/>
    <property type="match status" value="1"/>
</dbReference>
<dbReference type="Pfam" id="PF00190">
    <property type="entry name" value="Cupin_1"/>
    <property type="match status" value="2"/>
</dbReference>
<dbReference type="SMART" id="SM00835">
    <property type="entry name" value="Cupin_1"/>
    <property type="match status" value="2"/>
</dbReference>
<dbReference type="SUPFAM" id="SSF51182">
    <property type="entry name" value="RmlC-like cupins"/>
    <property type="match status" value="1"/>
</dbReference>
<proteinExistence type="evidence at protein level"/>
<keyword id="KW-0002">3D-structure</keyword>
<keyword id="KW-0020">Allergen</keyword>
<keyword id="KW-0903">Direct protein sequencing</keyword>
<keyword id="KW-0325">Glycoprotein</keyword>
<keyword id="KW-0708">Seed storage protein</keyword>
<keyword id="KW-0732">Signal</keyword>
<keyword id="KW-0758">Storage protein</keyword>
<name>CONB1_LUPAL</name>